<proteinExistence type="inferred from homology"/>
<accession>A8IBF3</accession>
<protein>
    <recommendedName>
        <fullName evidence="1">Enolase</fullName>
        <ecNumber evidence="1">4.2.1.11</ecNumber>
    </recommendedName>
    <alternativeName>
        <fullName evidence="1">2-phospho-D-glycerate hydro-lyase</fullName>
    </alternativeName>
    <alternativeName>
        <fullName evidence="1">2-phosphoglycerate dehydratase</fullName>
    </alternativeName>
</protein>
<keyword id="KW-0963">Cytoplasm</keyword>
<keyword id="KW-0324">Glycolysis</keyword>
<keyword id="KW-0456">Lyase</keyword>
<keyword id="KW-0460">Magnesium</keyword>
<keyword id="KW-0479">Metal-binding</keyword>
<keyword id="KW-1185">Reference proteome</keyword>
<keyword id="KW-0964">Secreted</keyword>
<name>ENO_AZOC5</name>
<evidence type="ECO:0000255" key="1">
    <source>
        <dbReference type="HAMAP-Rule" id="MF_00318"/>
    </source>
</evidence>
<gene>
    <name evidence="1" type="primary">eno</name>
    <name type="ordered locus">AZC_3061</name>
</gene>
<dbReference type="EC" id="4.2.1.11" evidence="1"/>
<dbReference type="EMBL" id="AP009384">
    <property type="protein sequence ID" value="BAF89059.1"/>
    <property type="molecule type" value="Genomic_DNA"/>
</dbReference>
<dbReference type="RefSeq" id="WP_012171585.1">
    <property type="nucleotide sequence ID" value="NC_009937.1"/>
</dbReference>
<dbReference type="SMR" id="A8IBF3"/>
<dbReference type="STRING" id="438753.AZC_3061"/>
<dbReference type="KEGG" id="azc:AZC_3061"/>
<dbReference type="eggNOG" id="COG0148">
    <property type="taxonomic scope" value="Bacteria"/>
</dbReference>
<dbReference type="HOGENOM" id="CLU_031223_2_1_5"/>
<dbReference type="UniPathway" id="UPA00109">
    <property type="reaction ID" value="UER00187"/>
</dbReference>
<dbReference type="Proteomes" id="UP000000270">
    <property type="component" value="Chromosome"/>
</dbReference>
<dbReference type="GO" id="GO:0009986">
    <property type="term" value="C:cell surface"/>
    <property type="evidence" value="ECO:0007669"/>
    <property type="project" value="UniProtKB-SubCell"/>
</dbReference>
<dbReference type="GO" id="GO:0005576">
    <property type="term" value="C:extracellular region"/>
    <property type="evidence" value="ECO:0007669"/>
    <property type="project" value="UniProtKB-SubCell"/>
</dbReference>
<dbReference type="GO" id="GO:0000015">
    <property type="term" value="C:phosphopyruvate hydratase complex"/>
    <property type="evidence" value="ECO:0007669"/>
    <property type="project" value="InterPro"/>
</dbReference>
<dbReference type="GO" id="GO:0000287">
    <property type="term" value="F:magnesium ion binding"/>
    <property type="evidence" value="ECO:0007669"/>
    <property type="project" value="UniProtKB-UniRule"/>
</dbReference>
<dbReference type="GO" id="GO:0004634">
    <property type="term" value="F:phosphopyruvate hydratase activity"/>
    <property type="evidence" value="ECO:0007669"/>
    <property type="project" value="UniProtKB-UniRule"/>
</dbReference>
<dbReference type="GO" id="GO:0006096">
    <property type="term" value="P:glycolytic process"/>
    <property type="evidence" value="ECO:0007669"/>
    <property type="project" value="UniProtKB-UniRule"/>
</dbReference>
<dbReference type="CDD" id="cd03313">
    <property type="entry name" value="enolase"/>
    <property type="match status" value="1"/>
</dbReference>
<dbReference type="FunFam" id="3.20.20.120:FF:000001">
    <property type="entry name" value="Enolase"/>
    <property type="match status" value="1"/>
</dbReference>
<dbReference type="FunFam" id="3.30.390.10:FF:000001">
    <property type="entry name" value="Enolase"/>
    <property type="match status" value="1"/>
</dbReference>
<dbReference type="Gene3D" id="3.20.20.120">
    <property type="entry name" value="Enolase-like C-terminal domain"/>
    <property type="match status" value="1"/>
</dbReference>
<dbReference type="Gene3D" id="3.30.390.10">
    <property type="entry name" value="Enolase-like, N-terminal domain"/>
    <property type="match status" value="1"/>
</dbReference>
<dbReference type="HAMAP" id="MF_00318">
    <property type="entry name" value="Enolase"/>
    <property type="match status" value="1"/>
</dbReference>
<dbReference type="InterPro" id="IPR000941">
    <property type="entry name" value="Enolase"/>
</dbReference>
<dbReference type="InterPro" id="IPR036849">
    <property type="entry name" value="Enolase-like_C_sf"/>
</dbReference>
<dbReference type="InterPro" id="IPR029017">
    <property type="entry name" value="Enolase-like_N"/>
</dbReference>
<dbReference type="InterPro" id="IPR020810">
    <property type="entry name" value="Enolase_C"/>
</dbReference>
<dbReference type="InterPro" id="IPR020809">
    <property type="entry name" value="Enolase_CS"/>
</dbReference>
<dbReference type="InterPro" id="IPR020811">
    <property type="entry name" value="Enolase_N"/>
</dbReference>
<dbReference type="NCBIfam" id="TIGR01060">
    <property type="entry name" value="eno"/>
    <property type="match status" value="1"/>
</dbReference>
<dbReference type="PANTHER" id="PTHR11902">
    <property type="entry name" value="ENOLASE"/>
    <property type="match status" value="1"/>
</dbReference>
<dbReference type="PANTHER" id="PTHR11902:SF1">
    <property type="entry name" value="ENOLASE"/>
    <property type="match status" value="1"/>
</dbReference>
<dbReference type="Pfam" id="PF00113">
    <property type="entry name" value="Enolase_C"/>
    <property type="match status" value="1"/>
</dbReference>
<dbReference type="Pfam" id="PF03952">
    <property type="entry name" value="Enolase_N"/>
    <property type="match status" value="1"/>
</dbReference>
<dbReference type="PIRSF" id="PIRSF001400">
    <property type="entry name" value="Enolase"/>
    <property type="match status" value="1"/>
</dbReference>
<dbReference type="PRINTS" id="PR00148">
    <property type="entry name" value="ENOLASE"/>
</dbReference>
<dbReference type="SFLD" id="SFLDF00002">
    <property type="entry name" value="enolase"/>
    <property type="match status" value="1"/>
</dbReference>
<dbReference type="SFLD" id="SFLDG00178">
    <property type="entry name" value="enolase"/>
    <property type="match status" value="1"/>
</dbReference>
<dbReference type="SMART" id="SM01192">
    <property type="entry name" value="Enolase_C"/>
    <property type="match status" value="1"/>
</dbReference>
<dbReference type="SMART" id="SM01193">
    <property type="entry name" value="Enolase_N"/>
    <property type="match status" value="1"/>
</dbReference>
<dbReference type="SUPFAM" id="SSF51604">
    <property type="entry name" value="Enolase C-terminal domain-like"/>
    <property type="match status" value="1"/>
</dbReference>
<dbReference type="SUPFAM" id="SSF54826">
    <property type="entry name" value="Enolase N-terminal domain-like"/>
    <property type="match status" value="1"/>
</dbReference>
<dbReference type="PROSITE" id="PS00164">
    <property type="entry name" value="ENOLASE"/>
    <property type="match status" value="1"/>
</dbReference>
<comment type="function">
    <text evidence="1">Catalyzes the reversible conversion of 2-phosphoglycerate (2-PG) into phosphoenolpyruvate (PEP). It is essential for the degradation of carbohydrates via glycolysis.</text>
</comment>
<comment type="catalytic activity">
    <reaction evidence="1">
        <text>(2R)-2-phosphoglycerate = phosphoenolpyruvate + H2O</text>
        <dbReference type="Rhea" id="RHEA:10164"/>
        <dbReference type="ChEBI" id="CHEBI:15377"/>
        <dbReference type="ChEBI" id="CHEBI:58289"/>
        <dbReference type="ChEBI" id="CHEBI:58702"/>
        <dbReference type="EC" id="4.2.1.11"/>
    </reaction>
</comment>
<comment type="cofactor">
    <cofactor evidence="1">
        <name>Mg(2+)</name>
        <dbReference type="ChEBI" id="CHEBI:18420"/>
    </cofactor>
    <text evidence="1">Binds a second Mg(2+) ion via substrate during catalysis.</text>
</comment>
<comment type="pathway">
    <text evidence="1">Carbohydrate degradation; glycolysis; pyruvate from D-glyceraldehyde 3-phosphate: step 4/5.</text>
</comment>
<comment type="subcellular location">
    <subcellularLocation>
        <location evidence="1">Cytoplasm</location>
    </subcellularLocation>
    <subcellularLocation>
        <location evidence="1">Secreted</location>
    </subcellularLocation>
    <subcellularLocation>
        <location evidence="1">Cell surface</location>
    </subcellularLocation>
    <text evidence="1">Fractions of enolase are present in both the cytoplasm and on the cell surface.</text>
</comment>
<comment type="similarity">
    <text evidence="1">Belongs to the enolase family.</text>
</comment>
<organism>
    <name type="scientific">Azorhizobium caulinodans (strain ATCC 43989 / DSM 5975 / JCM 20966 / LMG 6465 / NBRC 14845 / NCIMB 13405 / ORS 571)</name>
    <dbReference type="NCBI Taxonomy" id="438753"/>
    <lineage>
        <taxon>Bacteria</taxon>
        <taxon>Pseudomonadati</taxon>
        <taxon>Pseudomonadota</taxon>
        <taxon>Alphaproteobacteria</taxon>
        <taxon>Hyphomicrobiales</taxon>
        <taxon>Xanthobacteraceae</taxon>
        <taxon>Azorhizobium</taxon>
    </lineage>
</organism>
<sequence>MTAIVDIVGREILDSRGNPTVEVDVLLEDGALGRAAVPSGASTGAHEAVELRDGDTGRYLGKGVEKAVEAVNGEIFDAIGGLDAEEQAQIDAVMIELDGTPNKARLGANAILGVSLAVAKAAAISNNLPLYRYVGGVNARTLPVPMMNIINGGAHADNPIDFQEFMILPAGAPTFAEGLRWGAEIFHTLKKGLKDAGHNTNVGDEGGFAPNLASAEAALDFVLKAIEKAGFKPGEDVFLGLDCAATEFFKDGAYHYEGEGKVRDIDAQVKYLAQLVGNYPIVTIEDGMSEDDWAGWKQLTDAIGAKCQLVGDDLFVTNVERLGRGIKEATGNAILVKVNQIGSLTETLETVELAHKSGYRAVMSHRSGETEDSTIADLAVATNCGQIKTGSLARSDRTAKYNQLLRIEQELGAQAKYAGKAALKAFA</sequence>
<reference key="1">
    <citation type="submission" date="2007-04" db="EMBL/GenBank/DDBJ databases">
        <title>Complete genome sequence of the nitrogen-fixing bacterium Azorhizobium caulinodans ORS571.</title>
        <authorList>
            <person name="Lee K.B."/>
            <person name="Backer P.D."/>
            <person name="Aono T."/>
            <person name="Liu C.T."/>
            <person name="Suzuki S."/>
            <person name="Suzuki T."/>
            <person name="Kaneko T."/>
            <person name="Yamada M."/>
            <person name="Tabata S."/>
            <person name="Kupfer D.M."/>
            <person name="Najar F.Z."/>
            <person name="Wiley G.B."/>
            <person name="Roe B."/>
            <person name="Binnewies T."/>
            <person name="Ussery D."/>
            <person name="Vereecke D."/>
            <person name="Gevers D."/>
            <person name="Holsters M."/>
            <person name="Oyaizu H."/>
        </authorList>
    </citation>
    <scope>NUCLEOTIDE SEQUENCE [LARGE SCALE GENOMIC DNA]</scope>
    <source>
        <strain>ATCC 43989 / DSM 5975 / JCM 20966 / LMG 6465 / NBRC 14845 / NCIMB 13405 / ORS 571</strain>
    </source>
</reference>
<feature type="chain" id="PRO_1000072005" description="Enolase">
    <location>
        <begin position="1"/>
        <end position="427"/>
    </location>
</feature>
<feature type="active site" description="Proton donor" evidence="1">
    <location>
        <position position="205"/>
    </location>
</feature>
<feature type="active site" description="Proton acceptor" evidence="1">
    <location>
        <position position="337"/>
    </location>
</feature>
<feature type="binding site" evidence="1">
    <location>
        <position position="163"/>
    </location>
    <ligand>
        <name>(2R)-2-phosphoglycerate</name>
        <dbReference type="ChEBI" id="CHEBI:58289"/>
    </ligand>
</feature>
<feature type="binding site" evidence="1">
    <location>
        <position position="242"/>
    </location>
    <ligand>
        <name>Mg(2+)</name>
        <dbReference type="ChEBI" id="CHEBI:18420"/>
    </ligand>
</feature>
<feature type="binding site" evidence="1">
    <location>
        <position position="285"/>
    </location>
    <ligand>
        <name>Mg(2+)</name>
        <dbReference type="ChEBI" id="CHEBI:18420"/>
    </ligand>
</feature>
<feature type="binding site" evidence="1">
    <location>
        <position position="312"/>
    </location>
    <ligand>
        <name>Mg(2+)</name>
        <dbReference type="ChEBI" id="CHEBI:18420"/>
    </ligand>
</feature>
<feature type="binding site" evidence="1">
    <location>
        <position position="337"/>
    </location>
    <ligand>
        <name>(2R)-2-phosphoglycerate</name>
        <dbReference type="ChEBI" id="CHEBI:58289"/>
    </ligand>
</feature>
<feature type="binding site" evidence="1">
    <location>
        <position position="366"/>
    </location>
    <ligand>
        <name>(2R)-2-phosphoglycerate</name>
        <dbReference type="ChEBI" id="CHEBI:58289"/>
    </ligand>
</feature>
<feature type="binding site" evidence="1">
    <location>
        <position position="367"/>
    </location>
    <ligand>
        <name>(2R)-2-phosphoglycerate</name>
        <dbReference type="ChEBI" id="CHEBI:58289"/>
    </ligand>
</feature>
<feature type="binding site" evidence="1">
    <location>
        <position position="388"/>
    </location>
    <ligand>
        <name>(2R)-2-phosphoglycerate</name>
        <dbReference type="ChEBI" id="CHEBI:58289"/>
    </ligand>
</feature>